<dbReference type="EMBL" id="AE017220">
    <property type="protein sequence ID" value="AAX67147.1"/>
    <property type="molecule type" value="Genomic_DNA"/>
</dbReference>
<dbReference type="RefSeq" id="WP_000940593.1">
    <property type="nucleotide sequence ID" value="NC_006905.1"/>
</dbReference>
<dbReference type="SMR" id="Q57JG5"/>
<dbReference type="GeneID" id="66757642"/>
<dbReference type="KEGG" id="sec:SCH_3241"/>
<dbReference type="HOGENOM" id="CLU_095424_4_1_6"/>
<dbReference type="Proteomes" id="UP000000538">
    <property type="component" value="Chromosome"/>
</dbReference>
<dbReference type="GO" id="GO:0022625">
    <property type="term" value="C:cytosolic large ribosomal subunit"/>
    <property type="evidence" value="ECO:0007669"/>
    <property type="project" value="TreeGrafter"/>
</dbReference>
<dbReference type="GO" id="GO:0003735">
    <property type="term" value="F:structural constituent of ribosome"/>
    <property type="evidence" value="ECO:0007669"/>
    <property type="project" value="InterPro"/>
</dbReference>
<dbReference type="GO" id="GO:0006412">
    <property type="term" value="P:translation"/>
    <property type="evidence" value="ECO:0007669"/>
    <property type="project" value="UniProtKB-UniRule"/>
</dbReference>
<dbReference type="FunFam" id="2.40.50.100:FF:000001">
    <property type="entry name" value="50S ribosomal protein L27"/>
    <property type="match status" value="1"/>
</dbReference>
<dbReference type="Gene3D" id="2.40.50.100">
    <property type="match status" value="1"/>
</dbReference>
<dbReference type="HAMAP" id="MF_00539">
    <property type="entry name" value="Ribosomal_bL27"/>
    <property type="match status" value="1"/>
</dbReference>
<dbReference type="InterPro" id="IPR001684">
    <property type="entry name" value="Ribosomal_bL27"/>
</dbReference>
<dbReference type="InterPro" id="IPR018261">
    <property type="entry name" value="Ribosomal_bL27_CS"/>
</dbReference>
<dbReference type="NCBIfam" id="TIGR00062">
    <property type="entry name" value="L27"/>
    <property type="match status" value="1"/>
</dbReference>
<dbReference type="PANTHER" id="PTHR15893:SF0">
    <property type="entry name" value="LARGE RIBOSOMAL SUBUNIT PROTEIN BL27M"/>
    <property type="match status" value="1"/>
</dbReference>
<dbReference type="PANTHER" id="PTHR15893">
    <property type="entry name" value="RIBOSOMAL PROTEIN L27"/>
    <property type="match status" value="1"/>
</dbReference>
<dbReference type="Pfam" id="PF01016">
    <property type="entry name" value="Ribosomal_L27"/>
    <property type="match status" value="1"/>
</dbReference>
<dbReference type="PRINTS" id="PR00063">
    <property type="entry name" value="RIBOSOMALL27"/>
</dbReference>
<dbReference type="SUPFAM" id="SSF110324">
    <property type="entry name" value="Ribosomal L27 protein-like"/>
    <property type="match status" value="1"/>
</dbReference>
<dbReference type="PROSITE" id="PS00831">
    <property type="entry name" value="RIBOSOMAL_L27"/>
    <property type="match status" value="1"/>
</dbReference>
<gene>
    <name evidence="1" type="primary">rpmA</name>
    <name type="ordered locus">SCH_3241</name>
</gene>
<keyword id="KW-0687">Ribonucleoprotein</keyword>
<keyword id="KW-0689">Ribosomal protein</keyword>
<accession>Q57JG5</accession>
<protein>
    <recommendedName>
        <fullName evidence="1">Large ribosomal subunit protein bL27</fullName>
    </recommendedName>
    <alternativeName>
        <fullName evidence="3">50S ribosomal protein L27</fullName>
    </alternativeName>
</protein>
<sequence>MAHKKAGGSTRNGRDSEAKRLGVKRFGGEAVLAGSIIVRQRGTKFHAGTNVGCGRDHTLFAKADGKVKFEVKGPKNRKYISIVAE</sequence>
<proteinExistence type="inferred from homology"/>
<organism>
    <name type="scientific">Salmonella choleraesuis (strain SC-B67)</name>
    <dbReference type="NCBI Taxonomy" id="321314"/>
    <lineage>
        <taxon>Bacteria</taxon>
        <taxon>Pseudomonadati</taxon>
        <taxon>Pseudomonadota</taxon>
        <taxon>Gammaproteobacteria</taxon>
        <taxon>Enterobacterales</taxon>
        <taxon>Enterobacteriaceae</taxon>
        <taxon>Salmonella</taxon>
    </lineage>
</organism>
<feature type="chain" id="PRO_1000017594" description="Large ribosomal subunit protein bL27">
    <location>
        <begin position="1"/>
        <end position="85"/>
    </location>
</feature>
<feature type="region of interest" description="Disordered" evidence="2">
    <location>
        <begin position="1"/>
        <end position="20"/>
    </location>
</feature>
<reference key="1">
    <citation type="journal article" date="2005" name="Nucleic Acids Res.">
        <title>The genome sequence of Salmonella enterica serovar Choleraesuis, a highly invasive and resistant zoonotic pathogen.</title>
        <authorList>
            <person name="Chiu C.-H."/>
            <person name="Tang P."/>
            <person name="Chu C."/>
            <person name="Hu S."/>
            <person name="Bao Q."/>
            <person name="Yu J."/>
            <person name="Chou Y.-Y."/>
            <person name="Wang H.-S."/>
            <person name="Lee Y.-S."/>
        </authorList>
    </citation>
    <scope>NUCLEOTIDE SEQUENCE [LARGE SCALE GENOMIC DNA]</scope>
    <source>
        <strain>SC-B67</strain>
    </source>
</reference>
<evidence type="ECO:0000255" key="1">
    <source>
        <dbReference type="HAMAP-Rule" id="MF_00539"/>
    </source>
</evidence>
<evidence type="ECO:0000256" key="2">
    <source>
        <dbReference type="SAM" id="MobiDB-lite"/>
    </source>
</evidence>
<evidence type="ECO:0000305" key="3"/>
<name>RL27_SALCH</name>
<comment type="similarity">
    <text evidence="1">Belongs to the bacterial ribosomal protein bL27 family.</text>
</comment>